<protein>
    <recommendedName>
        <fullName evidence="1">tRNA pseudouridine synthase A</fullName>
        <ecNumber evidence="1">5.4.99.12</ecNumber>
    </recommendedName>
    <alternativeName>
        <fullName evidence="1">tRNA pseudouridine(38-40) synthase</fullName>
    </alternativeName>
    <alternativeName>
        <fullName evidence="1">tRNA pseudouridylate synthase I</fullName>
    </alternativeName>
    <alternativeName>
        <fullName evidence="1">tRNA-uridine isomerase I</fullName>
    </alternativeName>
</protein>
<comment type="function">
    <text evidence="1">Formation of pseudouridine at positions 38, 39 and 40 in the anticodon stem and loop of transfer RNAs.</text>
</comment>
<comment type="catalytic activity">
    <reaction evidence="1">
        <text>uridine(38/39/40) in tRNA = pseudouridine(38/39/40) in tRNA</text>
        <dbReference type="Rhea" id="RHEA:22376"/>
        <dbReference type="Rhea" id="RHEA-COMP:10085"/>
        <dbReference type="Rhea" id="RHEA-COMP:10087"/>
        <dbReference type="ChEBI" id="CHEBI:65314"/>
        <dbReference type="ChEBI" id="CHEBI:65315"/>
        <dbReference type="EC" id="5.4.99.12"/>
    </reaction>
</comment>
<comment type="subunit">
    <text evidence="1">Homodimer.</text>
</comment>
<comment type="similarity">
    <text evidence="1">Belongs to the tRNA pseudouridine synthase TruA family.</text>
</comment>
<sequence length="269" mass="30638">MKIALGIEYNGTHYFGWQRQANVTSVQEKLESAVSFVANEFCQIYCAGRTDSGVHATGQVVHFDTKAIRSEKAWTFGLNANLPADIAVRWAKVVSEDFHARFSATARRYRYLIYNHPLRSALFPTGVTHHHVALDHRLMHQAGQYLLGEHDFSSFRAAQCQSNTPWRNIHHLHVFRQANYIIVDIQANAFVHHMVRNIVGSLLEIGSGKQPVEWMDWLLTQKDRTLAAPTAKPDGLYLVEVKYPNHFNLPKNPLGPLFLGEPKIDFNHD</sequence>
<accession>Q0I4X5</accession>
<organism>
    <name type="scientific">Histophilus somni (strain 129Pt)</name>
    <name type="common">Haemophilus somnus</name>
    <dbReference type="NCBI Taxonomy" id="205914"/>
    <lineage>
        <taxon>Bacteria</taxon>
        <taxon>Pseudomonadati</taxon>
        <taxon>Pseudomonadota</taxon>
        <taxon>Gammaproteobacteria</taxon>
        <taxon>Pasteurellales</taxon>
        <taxon>Pasteurellaceae</taxon>
        <taxon>Histophilus</taxon>
    </lineage>
</organism>
<keyword id="KW-0413">Isomerase</keyword>
<keyword id="KW-0819">tRNA processing</keyword>
<reference key="1">
    <citation type="journal article" date="2007" name="J. Bacteriol.">
        <title>Complete genome sequence of Haemophilus somnus (Histophilus somni) strain 129Pt and comparison to Haemophilus ducreyi 35000HP and Haemophilus influenzae Rd.</title>
        <authorList>
            <person name="Challacombe J.F."/>
            <person name="Duncan A.J."/>
            <person name="Brettin T.S."/>
            <person name="Bruce D."/>
            <person name="Chertkov O."/>
            <person name="Detter J.C."/>
            <person name="Han C.S."/>
            <person name="Misra M."/>
            <person name="Richardson P."/>
            <person name="Tapia R."/>
            <person name="Thayer N."/>
            <person name="Xie G."/>
            <person name="Inzana T.J."/>
        </authorList>
    </citation>
    <scope>NUCLEOTIDE SEQUENCE [LARGE SCALE GENOMIC DNA]</scope>
    <source>
        <strain>129Pt</strain>
    </source>
</reference>
<gene>
    <name evidence="1" type="primary">truA</name>
    <name type="ordered locus">HS_1258</name>
</gene>
<feature type="chain" id="PRO_1000017091" description="tRNA pseudouridine synthase A">
    <location>
        <begin position="1"/>
        <end position="269"/>
    </location>
</feature>
<feature type="active site" description="Nucleophile" evidence="1">
    <location>
        <position position="51"/>
    </location>
</feature>
<feature type="binding site" evidence="1">
    <location>
        <position position="109"/>
    </location>
    <ligand>
        <name>substrate</name>
    </ligand>
</feature>
<proteinExistence type="inferred from homology"/>
<evidence type="ECO:0000255" key="1">
    <source>
        <dbReference type="HAMAP-Rule" id="MF_00171"/>
    </source>
</evidence>
<dbReference type="EC" id="5.4.99.12" evidence="1"/>
<dbReference type="EMBL" id="CP000436">
    <property type="protein sequence ID" value="ABI25533.1"/>
    <property type="molecule type" value="Genomic_DNA"/>
</dbReference>
<dbReference type="SMR" id="Q0I4X5"/>
<dbReference type="KEGG" id="hso:HS_1258"/>
<dbReference type="eggNOG" id="COG0101">
    <property type="taxonomic scope" value="Bacteria"/>
</dbReference>
<dbReference type="HOGENOM" id="CLU_014673_0_2_6"/>
<dbReference type="GO" id="GO:0003723">
    <property type="term" value="F:RNA binding"/>
    <property type="evidence" value="ECO:0007669"/>
    <property type="project" value="InterPro"/>
</dbReference>
<dbReference type="GO" id="GO:0160147">
    <property type="term" value="F:tRNA pseudouridine(38-40) synthase activity"/>
    <property type="evidence" value="ECO:0007669"/>
    <property type="project" value="UniProtKB-EC"/>
</dbReference>
<dbReference type="GO" id="GO:0031119">
    <property type="term" value="P:tRNA pseudouridine synthesis"/>
    <property type="evidence" value="ECO:0007669"/>
    <property type="project" value="UniProtKB-UniRule"/>
</dbReference>
<dbReference type="CDD" id="cd02570">
    <property type="entry name" value="PseudoU_synth_EcTruA"/>
    <property type="match status" value="1"/>
</dbReference>
<dbReference type="FunFam" id="3.30.70.580:FF:000001">
    <property type="entry name" value="tRNA pseudouridine synthase A"/>
    <property type="match status" value="1"/>
</dbReference>
<dbReference type="FunFam" id="3.30.70.660:FF:000001">
    <property type="entry name" value="tRNA pseudouridine synthase A"/>
    <property type="match status" value="1"/>
</dbReference>
<dbReference type="Gene3D" id="3.30.70.660">
    <property type="entry name" value="Pseudouridine synthase I, catalytic domain, C-terminal subdomain"/>
    <property type="match status" value="1"/>
</dbReference>
<dbReference type="Gene3D" id="3.30.70.580">
    <property type="entry name" value="Pseudouridine synthase I, catalytic domain, N-terminal subdomain"/>
    <property type="match status" value="1"/>
</dbReference>
<dbReference type="HAMAP" id="MF_00171">
    <property type="entry name" value="TruA"/>
    <property type="match status" value="1"/>
</dbReference>
<dbReference type="InterPro" id="IPR020103">
    <property type="entry name" value="PsdUridine_synth_cat_dom_sf"/>
</dbReference>
<dbReference type="InterPro" id="IPR001406">
    <property type="entry name" value="PsdUridine_synth_TruA"/>
</dbReference>
<dbReference type="InterPro" id="IPR020097">
    <property type="entry name" value="PsdUridine_synth_TruA_a/b_dom"/>
</dbReference>
<dbReference type="InterPro" id="IPR020095">
    <property type="entry name" value="PsdUridine_synth_TruA_C"/>
</dbReference>
<dbReference type="InterPro" id="IPR020094">
    <property type="entry name" value="TruA/RsuA/RluB/E/F_N"/>
</dbReference>
<dbReference type="NCBIfam" id="TIGR00071">
    <property type="entry name" value="hisT_truA"/>
    <property type="match status" value="1"/>
</dbReference>
<dbReference type="PANTHER" id="PTHR11142">
    <property type="entry name" value="PSEUDOURIDYLATE SYNTHASE"/>
    <property type="match status" value="1"/>
</dbReference>
<dbReference type="PANTHER" id="PTHR11142:SF0">
    <property type="entry name" value="TRNA PSEUDOURIDINE SYNTHASE-LIKE 1"/>
    <property type="match status" value="1"/>
</dbReference>
<dbReference type="Pfam" id="PF01416">
    <property type="entry name" value="PseudoU_synth_1"/>
    <property type="match status" value="2"/>
</dbReference>
<dbReference type="PIRSF" id="PIRSF001430">
    <property type="entry name" value="tRNA_psdUrid_synth"/>
    <property type="match status" value="1"/>
</dbReference>
<dbReference type="SUPFAM" id="SSF55120">
    <property type="entry name" value="Pseudouridine synthase"/>
    <property type="match status" value="1"/>
</dbReference>
<name>TRUA_HISS1</name>